<proteinExistence type="inferred from homology"/>
<protein>
    <recommendedName>
        <fullName evidence="1">Tryptophan synthase alpha chain</fullName>
        <ecNumber evidence="1">4.2.1.20</ecNumber>
    </recommendedName>
</protein>
<keyword id="KW-0028">Amino-acid biosynthesis</keyword>
<keyword id="KW-0057">Aromatic amino acid biosynthesis</keyword>
<keyword id="KW-0456">Lyase</keyword>
<keyword id="KW-1185">Reference proteome</keyword>
<keyword id="KW-0822">Tryptophan biosynthesis</keyword>
<organism>
    <name type="scientific">Jannaschia sp. (strain CCS1)</name>
    <dbReference type="NCBI Taxonomy" id="290400"/>
    <lineage>
        <taxon>Bacteria</taxon>
        <taxon>Pseudomonadati</taxon>
        <taxon>Pseudomonadota</taxon>
        <taxon>Alphaproteobacteria</taxon>
        <taxon>Rhodobacterales</taxon>
        <taxon>Roseobacteraceae</taxon>
        <taxon>Jannaschia</taxon>
    </lineage>
</organism>
<accession>Q28LB1</accession>
<comment type="function">
    <text evidence="1">The alpha subunit is responsible for the aldol cleavage of indoleglycerol phosphate to indole and glyceraldehyde 3-phosphate.</text>
</comment>
<comment type="catalytic activity">
    <reaction evidence="1">
        <text>(1S,2R)-1-C-(indol-3-yl)glycerol 3-phosphate + L-serine = D-glyceraldehyde 3-phosphate + L-tryptophan + H2O</text>
        <dbReference type="Rhea" id="RHEA:10532"/>
        <dbReference type="ChEBI" id="CHEBI:15377"/>
        <dbReference type="ChEBI" id="CHEBI:33384"/>
        <dbReference type="ChEBI" id="CHEBI:57912"/>
        <dbReference type="ChEBI" id="CHEBI:58866"/>
        <dbReference type="ChEBI" id="CHEBI:59776"/>
        <dbReference type="EC" id="4.2.1.20"/>
    </reaction>
</comment>
<comment type="pathway">
    <text evidence="1">Amino-acid biosynthesis; L-tryptophan biosynthesis; L-tryptophan from chorismate: step 5/5.</text>
</comment>
<comment type="subunit">
    <text evidence="1">Tetramer of two alpha and two beta chains.</text>
</comment>
<comment type="similarity">
    <text evidence="1">Belongs to the TrpA family.</text>
</comment>
<sequence length="263" mass="27373">MTRIDDTFARLSASGKKAFVSYIMAGDPDYATSLEVMRGLPAAGVDIIELGLPFTDPMADGSTIQLAGQRALDGGMTLDKTLQMVRDFRAGDDTTPIVLMGYYNPIYSRGVDRFLTDAREAGIDGLIVVDLPPEEDEELCIPAQAAGLNFIRLATPTTDDARLPAVLSNTSGFLYYVSITGITGAAAPQAADVAPEVARIKSATDIPVIVGFGITTSEAARTIAGVADGCVVGSAIVSRIAEGEPVADVLAFVKSLSDGAHAA</sequence>
<name>TRPA_JANSC</name>
<gene>
    <name evidence="1" type="primary">trpA</name>
    <name type="ordered locus">Jann_3584</name>
</gene>
<reference key="1">
    <citation type="submission" date="2006-02" db="EMBL/GenBank/DDBJ databases">
        <title>Complete sequence of chromosome of Jannaschia sp. CCS1.</title>
        <authorList>
            <consortium name="US DOE Joint Genome Institute"/>
            <person name="Copeland A."/>
            <person name="Lucas S."/>
            <person name="Lapidus A."/>
            <person name="Barry K."/>
            <person name="Detter J.C."/>
            <person name="Glavina del Rio T."/>
            <person name="Hammon N."/>
            <person name="Israni S."/>
            <person name="Pitluck S."/>
            <person name="Brettin T."/>
            <person name="Bruce D."/>
            <person name="Han C."/>
            <person name="Tapia R."/>
            <person name="Gilna P."/>
            <person name="Chertkov O."/>
            <person name="Saunders E."/>
            <person name="Schmutz J."/>
            <person name="Larimer F."/>
            <person name="Land M."/>
            <person name="Kyrpides N."/>
            <person name="Lykidis A."/>
            <person name="Moran M.A."/>
            <person name="Belas R."/>
            <person name="Ye W."/>
            <person name="Buchan A."/>
            <person name="Gonzalez J.M."/>
            <person name="Schell M.A."/>
            <person name="Richardson P."/>
        </authorList>
    </citation>
    <scope>NUCLEOTIDE SEQUENCE [LARGE SCALE GENOMIC DNA]</scope>
    <source>
        <strain>CCS1</strain>
    </source>
</reference>
<dbReference type="EC" id="4.2.1.20" evidence="1"/>
<dbReference type="EMBL" id="CP000264">
    <property type="protein sequence ID" value="ABD56501.1"/>
    <property type="molecule type" value="Genomic_DNA"/>
</dbReference>
<dbReference type="RefSeq" id="WP_011456701.1">
    <property type="nucleotide sequence ID" value="NC_007802.1"/>
</dbReference>
<dbReference type="SMR" id="Q28LB1"/>
<dbReference type="STRING" id="290400.Jann_3584"/>
<dbReference type="KEGG" id="jan:Jann_3584"/>
<dbReference type="eggNOG" id="COG0159">
    <property type="taxonomic scope" value="Bacteria"/>
</dbReference>
<dbReference type="HOGENOM" id="CLU_016734_0_0_5"/>
<dbReference type="OrthoDB" id="9804578at2"/>
<dbReference type="UniPathway" id="UPA00035">
    <property type="reaction ID" value="UER00044"/>
</dbReference>
<dbReference type="Proteomes" id="UP000008326">
    <property type="component" value="Chromosome"/>
</dbReference>
<dbReference type="GO" id="GO:0005829">
    <property type="term" value="C:cytosol"/>
    <property type="evidence" value="ECO:0007669"/>
    <property type="project" value="TreeGrafter"/>
</dbReference>
<dbReference type="GO" id="GO:0004834">
    <property type="term" value="F:tryptophan synthase activity"/>
    <property type="evidence" value="ECO:0007669"/>
    <property type="project" value="UniProtKB-UniRule"/>
</dbReference>
<dbReference type="CDD" id="cd04724">
    <property type="entry name" value="Tryptophan_synthase_alpha"/>
    <property type="match status" value="1"/>
</dbReference>
<dbReference type="FunFam" id="3.20.20.70:FF:000037">
    <property type="entry name" value="Tryptophan synthase alpha chain"/>
    <property type="match status" value="1"/>
</dbReference>
<dbReference type="Gene3D" id="3.20.20.70">
    <property type="entry name" value="Aldolase class I"/>
    <property type="match status" value="1"/>
</dbReference>
<dbReference type="HAMAP" id="MF_00131">
    <property type="entry name" value="Trp_synth_alpha"/>
    <property type="match status" value="1"/>
</dbReference>
<dbReference type="InterPro" id="IPR013785">
    <property type="entry name" value="Aldolase_TIM"/>
</dbReference>
<dbReference type="InterPro" id="IPR011060">
    <property type="entry name" value="RibuloseP-bd_barrel"/>
</dbReference>
<dbReference type="InterPro" id="IPR018204">
    <property type="entry name" value="Trp_synthase_alpha_AS"/>
</dbReference>
<dbReference type="InterPro" id="IPR002028">
    <property type="entry name" value="Trp_synthase_suA"/>
</dbReference>
<dbReference type="NCBIfam" id="TIGR00262">
    <property type="entry name" value="trpA"/>
    <property type="match status" value="1"/>
</dbReference>
<dbReference type="PANTHER" id="PTHR43406:SF1">
    <property type="entry name" value="TRYPTOPHAN SYNTHASE ALPHA CHAIN, CHLOROPLASTIC"/>
    <property type="match status" value="1"/>
</dbReference>
<dbReference type="PANTHER" id="PTHR43406">
    <property type="entry name" value="TRYPTOPHAN SYNTHASE, ALPHA CHAIN"/>
    <property type="match status" value="1"/>
</dbReference>
<dbReference type="Pfam" id="PF00290">
    <property type="entry name" value="Trp_syntA"/>
    <property type="match status" value="1"/>
</dbReference>
<dbReference type="SUPFAM" id="SSF51366">
    <property type="entry name" value="Ribulose-phoshate binding barrel"/>
    <property type="match status" value="1"/>
</dbReference>
<dbReference type="PROSITE" id="PS00167">
    <property type="entry name" value="TRP_SYNTHASE_ALPHA"/>
    <property type="match status" value="1"/>
</dbReference>
<evidence type="ECO:0000255" key="1">
    <source>
        <dbReference type="HAMAP-Rule" id="MF_00131"/>
    </source>
</evidence>
<feature type="chain" id="PRO_1000018218" description="Tryptophan synthase alpha chain">
    <location>
        <begin position="1"/>
        <end position="263"/>
    </location>
</feature>
<feature type="active site" description="Proton acceptor" evidence="1">
    <location>
        <position position="49"/>
    </location>
</feature>
<feature type="active site" description="Proton acceptor" evidence="1">
    <location>
        <position position="60"/>
    </location>
</feature>